<accession>P42494</accession>
<sequence length="174" mass="20314">MLTLIQGKKIVNHLRSRLAFEYNGQLIKILSKNIVAVGSLRREEKMLNDVDLLIIVPEKKLLKHVLPNIRIKGLSFSVKVCGERKCVLFIEWEKKTYQLDLFTALAEEKPYAIFHFTGPVSYLIRIRAALKKKNYKLNQYGLFKNQTLVPLKITTEKELIKELGFTYRIPKKRL</sequence>
<name>DPOLX_ASFB7</name>
<comment type="function">
    <text evidence="2 3 5 6 8">Error-prone polymerase lacking a proofreading 3'-5' exonuclease which catalyzes the gap-filling reaction during the DNA repair process (PubMed:11685239, PubMed:28245220). Specifically binds intermediates in the single-nucleotide base-excision repair process (PubMed:12595253). Also catalyzes DNA polymerization with low nucleotide-insertion fidelity (PubMed:24617852). Probably acts as a strategic DNA mutase, which gives rise to a rapid emergence of variants (PubMed:11685239). Generates mismatched G-G pairs, in that case, the polymerase first binds the deoxynucleotide followed by mismatch formation (PubMed:24617852). Together with the viral DNA ligase, fills the single nucleotide gaps generated by the AP endonuclease (Probable). Binds DNA with high affinity via the helix alphaE (PubMed:24617852).</text>
</comment>
<comment type="catalytic activity">
    <reaction evidence="5">
        <text>DNA(n) + a 2'-deoxyribonucleoside 5'-triphosphate = DNA(n+1) + diphosphate</text>
        <dbReference type="Rhea" id="RHEA:22508"/>
        <dbReference type="Rhea" id="RHEA-COMP:17339"/>
        <dbReference type="Rhea" id="RHEA-COMP:17340"/>
        <dbReference type="ChEBI" id="CHEBI:33019"/>
        <dbReference type="ChEBI" id="CHEBI:61560"/>
        <dbReference type="ChEBI" id="CHEBI:173112"/>
        <dbReference type="EC" id="2.7.7.7"/>
    </reaction>
</comment>
<comment type="cofactor">
    <cofactor evidence="2 6">
        <name>Mg(2+)</name>
        <dbReference type="ChEBI" id="CHEBI:18420"/>
    </cofactor>
    <text>In the presence of magnesium, pol X shows a strong preference for the ssDNA gaps having one and two nucleotides.</text>
</comment>
<comment type="biophysicochemical properties">
    <kinetics>
        <KM evidence="5">0.26 uM for dGTP</KM>
        <KM evidence="5">0.46 uM for dATP</KM>
        <KM evidence="5">9.4 uM for dCTP</KM>
        <KM evidence="5">8.6 uM for dTTP</KM>
    </kinetics>
</comment>
<comment type="subcellular location">
    <subcellularLocation>
        <location evidence="7">Virion</location>
    </subcellularLocation>
    <text evidence="7">Found in association with viral nucleoid.</text>
</comment>
<comment type="domain">
    <text evidence="2 5">Small DNA polymerase formed from only a palm and a C-terminal subdomain (PubMed:11685239). Unlike other polymerases, binds DNA via the helix alphaE (PubMed:24617852). The total DNA-binding site of pol X is composed of two DNA-binding subsites.</text>
</comment>
<comment type="miscellaneous">
    <text evidence="8">Consistent with its intracellular location, ASFV encodes its own replicative DNA polymerase and three base excision repair enzymes: a class II AP endonuclease, the repair polymerase Pol X, and an ATP-dependent DNA ligase.</text>
</comment>
<comment type="similarity">
    <text evidence="8">Belongs to the DNA polymerase type-X family.</text>
</comment>
<organismHost>
    <name type="scientific">Ornithodoros</name>
    <name type="common">relapsing fever ticks</name>
    <dbReference type="NCBI Taxonomy" id="6937"/>
</organismHost>
<organismHost>
    <name type="scientific">Sus scrofa</name>
    <name type="common">Pig</name>
    <dbReference type="NCBI Taxonomy" id="9823"/>
</organismHost>
<gene>
    <name type="ordered locus">Ba71V-97</name>
    <name type="ORF">O174L</name>
</gene>
<feature type="chain" id="PRO_0000218798" description="Repair DNA polymerase X">
    <location>
        <begin position="1"/>
        <end position="174"/>
    </location>
</feature>
<feature type="region of interest" description="Involved in ssDNA binding" evidence="1">
    <location>
        <begin position="42"/>
        <end position="51"/>
    </location>
</feature>
<feature type="binding site" evidence="2 9">
    <location>
        <position position="49"/>
    </location>
    <ligand>
        <name>Mg(2+)</name>
        <dbReference type="ChEBI" id="CHEBI:18420"/>
    </ligand>
</feature>
<feature type="binding site" evidence="2 9">
    <location>
        <position position="51"/>
    </location>
    <ligand>
        <name>Mg(2+)</name>
        <dbReference type="ChEBI" id="CHEBI:18420"/>
    </ligand>
</feature>
<feature type="binding site" evidence="2 9">
    <location>
        <position position="100"/>
    </location>
    <ligand>
        <name>Mg(2+)</name>
        <dbReference type="ChEBI" id="CHEBI:18420"/>
    </ligand>
</feature>
<feature type="site" description="Stabilizes dGTP in a syn conformation to overcome the Watson-Crick base pairing constraint" evidence="5">
    <location>
        <position position="115"/>
    </location>
</feature>
<feature type="disulfide bond" evidence="2">
    <location>
        <begin position="81"/>
        <end position="86"/>
    </location>
</feature>
<feature type="mutagenesis site" description="Complete loss of MgdGTP binding and dG:dGTP ternary complex formation but not dG:dCTP ternary complex formation." evidence="5">
    <original>H</original>
    <variation>A</variation>
    <location>
        <position position="115"/>
    </location>
</feature>
<feature type="mutagenesis site" description="18x decreased dG:dGTP misincorporation." evidence="5">
    <original>H</original>
    <variation>D</variation>
    <location>
        <position position="115"/>
    </location>
</feature>
<feature type="mutagenesis site" description="36x decreased dG:dGTP misincorporation." evidence="5">
    <original>H</original>
    <variation>E</variation>
    <location>
        <position position="115"/>
    </location>
</feature>
<feature type="mutagenesis site" description="Slower dG:dGTP misincorporation." evidence="5">
    <original>H</original>
    <variation>F</variation>
    <location>
        <position position="115"/>
    </location>
</feature>
<feature type="mutagenesis site" description="Loss of DNA binding affinity. Decreased dG:dGTP misincorporation." evidence="6">
    <original>R</original>
    <variation>A</variation>
    <location>
        <position position="125"/>
    </location>
</feature>
<feature type="mutagenesis site" description="Slower dG:dGTP misincorporation." evidence="6">
    <original>R</original>
    <variation>A</variation>
    <location>
        <position position="127"/>
    </location>
</feature>
<feature type="mutagenesis site" description="Loss of DNA binding affinity. Decreased dGTP misincorporation." evidence="6">
    <original>R</original>
    <variation>A</variation>
    <location>
        <position position="168"/>
    </location>
</feature>
<feature type="helix" evidence="28">
    <location>
        <begin position="4"/>
        <end position="14"/>
    </location>
</feature>
<feature type="turn" evidence="28">
    <location>
        <begin position="15"/>
        <end position="17"/>
    </location>
</feature>
<feature type="strand" evidence="28">
    <location>
        <begin position="18"/>
        <end position="22"/>
    </location>
</feature>
<feature type="strand" evidence="28">
    <location>
        <begin position="25"/>
        <end position="28"/>
    </location>
</feature>
<feature type="helix" evidence="28">
    <location>
        <begin position="31"/>
        <end position="33"/>
    </location>
</feature>
<feature type="strand" evidence="28">
    <location>
        <begin position="34"/>
        <end position="36"/>
    </location>
</feature>
<feature type="helix" evidence="28">
    <location>
        <begin position="38"/>
        <end position="41"/>
    </location>
</feature>
<feature type="strand" evidence="28">
    <location>
        <begin position="45"/>
        <end position="57"/>
    </location>
</feature>
<feature type="helix" evidence="28">
    <location>
        <begin position="59"/>
        <end position="64"/>
    </location>
</feature>
<feature type="helix" evidence="28">
    <location>
        <begin position="66"/>
        <end position="68"/>
    </location>
</feature>
<feature type="strand" evidence="28">
    <location>
        <begin position="69"/>
        <end position="71"/>
    </location>
</feature>
<feature type="strand" evidence="28">
    <location>
        <begin position="76"/>
        <end position="81"/>
    </location>
</feature>
<feature type="strand" evidence="28">
    <location>
        <begin position="83"/>
        <end position="92"/>
    </location>
</feature>
<feature type="strand" evidence="28">
    <location>
        <begin position="95"/>
        <end position="105"/>
    </location>
</feature>
<feature type="helix" evidence="28">
    <location>
        <begin position="106"/>
        <end position="108"/>
    </location>
</feature>
<feature type="helix" evidence="28">
    <location>
        <begin position="109"/>
        <end position="117"/>
    </location>
</feature>
<feature type="helix" evidence="28">
    <location>
        <begin position="120"/>
        <end position="132"/>
    </location>
</feature>
<feature type="strand" evidence="28">
    <location>
        <begin position="135"/>
        <end position="138"/>
    </location>
</feature>
<feature type="strand" evidence="28">
    <location>
        <begin position="141"/>
        <end position="144"/>
    </location>
</feature>
<feature type="strand" evidence="27">
    <location>
        <begin position="147"/>
        <end position="149"/>
    </location>
</feature>
<feature type="helix" evidence="28">
    <location>
        <begin position="156"/>
        <end position="162"/>
    </location>
</feature>
<feature type="helix" evidence="28">
    <location>
        <begin position="170"/>
        <end position="172"/>
    </location>
</feature>
<organism>
    <name type="scientific">African swine fever virus (strain Badajoz 1971 Vero-adapted)</name>
    <name type="common">Ba71V</name>
    <name type="synonym">ASFV</name>
    <dbReference type="NCBI Taxonomy" id="10498"/>
    <lineage>
        <taxon>Viruses</taxon>
        <taxon>Varidnaviria</taxon>
        <taxon>Bamfordvirae</taxon>
        <taxon>Nucleocytoviricota</taxon>
        <taxon>Pokkesviricetes</taxon>
        <taxon>Asfuvirales</taxon>
        <taxon>Asfarviridae</taxon>
        <taxon>Asfivirus</taxon>
        <taxon>African swine fever virus</taxon>
    </lineage>
</organism>
<reference key="1">
    <citation type="journal article" date="1995" name="Virology">
        <title>Analysis of the complete nucleotide sequence of African swine fever virus.</title>
        <authorList>
            <person name="Yanez R.J."/>
            <person name="Rodriguez J.M."/>
            <person name="Nogal M.L."/>
            <person name="Yuste L."/>
            <person name="Enriquez C."/>
            <person name="Rodriguez J.F."/>
            <person name="Vinuela E."/>
        </authorList>
    </citation>
    <scope>NUCLEOTIDE SEQUENCE [LARGE SCALE GENOMIC DNA]</scope>
</reference>
<reference key="2">
    <citation type="journal article" date="2003" name="J. Mol. Biol.">
        <title>DNA polymerase X of African swine fever virus: insertion fidelity on gapped DNA substrates and AP lyase activity support a role in base excision repair of viral DNA.</title>
        <authorList>
            <person name="Garcia-Escudero R."/>
            <person name="Garcia-Diaz M."/>
            <person name="Salas M.L."/>
            <person name="Blanco L."/>
            <person name="Salas J."/>
        </authorList>
    </citation>
    <scope>FUNCTION</scope>
</reference>
<reference key="3">
    <citation type="journal article" date="2006" name="Biochemistry">
        <title>ASFV DNA polymerase X is extremely error-prone under diverse assay conditions and within multiple DNA sequence contexts.</title>
        <authorList>
            <person name="Lamarche B.J."/>
            <person name="Kumar S."/>
            <person name="Tsai M.-D."/>
        </authorList>
    </citation>
    <scope>CATALYTIC ACTIVITY</scope>
</reference>
<reference key="4">
    <citation type="journal article" date="2007" name="Biochemistry">
        <title>Interactions of the DNA polymerase X from African swine fever virus with gapped DNA substrates. Quantitative analysis of functional structures of the formed complexes.</title>
        <authorList>
            <person name="Jezewska M.J."/>
            <person name="Bujalowski P.J."/>
            <person name="Bujalowski W."/>
        </authorList>
    </citation>
    <scope>CHARACTERIZATION</scope>
</reference>
<reference key="5">
    <citation type="journal article" date="2007" name="J. Mol. Biol.">
        <title>Interactions of the DNA polymerase X of African swine fever virus with double-stranded DNA. Functional structure of the complex.</title>
        <authorList>
            <person name="Jezewska M.J."/>
            <person name="Bujalowski P.J."/>
            <person name="Bujalowski W."/>
        </authorList>
    </citation>
    <scope>CHARACTERIZATION</scope>
    <scope>DNA-BINDING</scope>
</reference>
<reference key="6">
    <citation type="journal article" date="2018" name="J. Virol.">
        <title>A Proteomic Atlas of the African Swine Fever Virus Particle.</title>
        <authorList>
            <person name="Alejo A."/>
            <person name="Matamoros T."/>
            <person name="Guerra M."/>
            <person name="Andres G."/>
        </authorList>
    </citation>
    <scope>SUBCELLULAR LOCATION</scope>
</reference>
<reference key="7">
    <citation type="journal article" date="2001" name="Nat. Struct. Biol.">
        <title>Solution structure of a viral DNA repair polymerase.</title>
        <authorList>
            <person name="Maciejewski M.W."/>
            <person name="Shin R."/>
            <person name="Pan B."/>
            <person name="Marintchev A."/>
            <person name="Denninger A."/>
            <person name="Mullen M.A."/>
            <person name="Chen K."/>
            <person name="Gryk M.R."/>
            <person name="Mullen G.P."/>
        </authorList>
    </citation>
    <scope>STRUCTURE BY NMR</scope>
</reference>
<reference key="8">
    <citation type="journal article" date="2001" name="Nat. Struct. Biol.">
        <title>Solution structure of a viral DNA polymerase X and evidence for a mutagenic function.</title>
        <authorList>
            <person name="Showalter A.K."/>
            <person name="Byeon I.-J."/>
            <person name="Su M.-I."/>
            <person name="Tsai M.-D."/>
        </authorList>
    </citation>
    <scope>STRUCTURE BY NMR</scope>
    <scope>FUNCTION</scope>
    <scope>DOMAIN</scope>
    <scope>DISULFIDE BOND</scope>
    <scope>COFACTOR</scope>
</reference>
<reference evidence="10 11 12 13" key="9">
    <citation type="journal article" date="2014" name="J. Am. Chem. Soc.">
        <title>How a low-fidelity DNA polymerase chooses non-Watson-Crick from Watson-Crick incorporation.</title>
        <authorList>
            <person name="Wu W.J."/>
            <person name="Su M.I."/>
            <person name="Wu J.L."/>
            <person name="Kumar S."/>
            <person name="Lim L.H."/>
            <person name="Wang C.W."/>
            <person name="Nelissen F.H."/>
            <person name="Chen M.C."/>
            <person name="Doreleijers J.F."/>
            <person name="Wijmenga S.S."/>
            <person name="Tsai M.D."/>
        </authorList>
    </citation>
    <scope>STRUCTURE BY NMR</scope>
    <scope>MUTAGENESIS OF HIS-115</scope>
    <scope>CATALYTIC ACTIVITY</scope>
    <scope>BIOPHYSICOCHEMICAL PROPERTIES</scope>
    <scope>FUNCTION</scope>
    <scope>DOMAIN</scope>
</reference>
<reference evidence="14 15 16 17 18 19 20 21 22 23" key="10">
    <citation type="journal article" date="2017" name="PLoS Biol.">
        <title>Unique 5'-P recognition and basis for dG:dGTP misincorporation of ASFV DNA polymerase X.</title>
        <authorList>
            <person name="Chen Y."/>
            <person name="Zhang J."/>
            <person name="Liu H."/>
            <person name="Gao Y."/>
            <person name="Li X."/>
            <person name="Zheng L."/>
            <person name="Cui R."/>
            <person name="Yao Q."/>
            <person name="Rong L."/>
            <person name="Li J."/>
            <person name="Huang Z."/>
            <person name="Ma J."/>
            <person name="Gan J."/>
        </authorList>
    </citation>
    <scope>X-RAY CRYSTALLOGRAPHY (1.70 ANGSTROMS) IN COMPLEX WITH MANGANESE</scope>
    <scope>MUTAGENESIS OF HIS-115; ARG-125; ARG-127 AND ARG-168</scope>
    <scope>COFACTOR</scope>
    <scope>FUNCTION</scope>
</reference>
<reference evidence="24 25 26" key="11">
    <citation type="journal article" date="2017" name="Nat. Commun.">
        <title>Crystal structure of an RNA-cleaving DNAzyme.</title>
        <authorList>
            <person name="Liu H."/>
            <person name="Yu X."/>
            <person name="Chen Y."/>
            <person name="Zhang J."/>
            <person name="Wu B."/>
            <person name="Zheng L."/>
            <person name="Haruehanroengra P."/>
            <person name="Wang R."/>
            <person name="Li S."/>
            <person name="Lin J."/>
            <person name="Li J."/>
            <person name="Sheng J."/>
            <person name="Huang Z."/>
            <person name="Ma J."/>
            <person name="Gan J."/>
        </authorList>
    </citation>
    <scope>X-RAY CRYSTALLOGRAPHY (2.55 ANGSTROMS)</scope>
</reference>
<keyword id="KW-0002">3D-structure</keyword>
<keyword id="KW-1015">Disulfide bond</keyword>
<keyword id="KW-0227">DNA damage</keyword>
<keyword id="KW-0234">DNA repair</keyword>
<keyword id="KW-0238">DNA-binding</keyword>
<keyword id="KW-0239">DNA-directed DNA polymerase</keyword>
<keyword id="KW-0460">Magnesium</keyword>
<keyword id="KW-0479">Metal-binding</keyword>
<keyword id="KW-0548">Nucleotidyltransferase</keyword>
<keyword id="KW-1185">Reference proteome</keyword>
<keyword id="KW-0808">Transferase</keyword>
<keyword id="KW-0946">Virion</keyword>
<evidence type="ECO:0000250" key="1"/>
<evidence type="ECO:0000269" key="2">
    <source>
    </source>
</evidence>
<evidence type="ECO:0000269" key="3">
    <source>
    </source>
</evidence>
<evidence type="ECO:0000269" key="4">
    <source>
    </source>
</evidence>
<evidence type="ECO:0000269" key="5">
    <source>
    </source>
</evidence>
<evidence type="ECO:0000269" key="6">
    <source>
    </source>
</evidence>
<evidence type="ECO:0000269" key="7">
    <source>
    </source>
</evidence>
<evidence type="ECO:0000305" key="8"/>
<evidence type="ECO:0000305" key="9">
    <source>
    </source>
</evidence>
<evidence type="ECO:0007744" key="10">
    <source>
        <dbReference type="PDB" id="2M2T"/>
    </source>
</evidence>
<evidence type="ECO:0007744" key="11">
    <source>
        <dbReference type="PDB" id="2M2U"/>
    </source>
</evidence>
<evidence type="ECO:0007744" key="12">
    <source>
        <dbReference type="PDB" id="2M2V"/>
    </source>
</evidence>
<evidence type="ECO:0007744" key="13">
    <source>
        <dbReference type="PDB" id="2M2W"/>
    </source>
</evidence>
<evidence type="ECO:0007744" key="14">
    <source>
        <dbReference type="PDB" id="5HR9"/>
    </source>
</evidence>
<evidence type="ECO:0007744" key="15">
    <source>
        <dbReference type="PDB" id="5HRB"/>
    </source>
</evidence>
<evidence type="ECO:0007744" key="16">
    <source>
        <dbReference type="PDB" id="5HRD"/>
    </source>
</evidence>
<evidence type="ECO:0007744" key="17">
    <source>
        <dbReference type="PDB" id="5HRE"/>
    </source>
</evidence>
<evidence type="ECO:0007744" key="18">
    <source>
        <dbReference type="PDB" id="5HRF"/>
    </source>
</evidence>
<evidence type="ECO:0007744" key="19">
    <source>
        <dbReference type="PDB" id="5HRG"/>
    </source>
</evidence>
<evidence type="ECO:0007744" key="20">
    <source>
        <dbReference type="PDB" id="5HRH"/>
    </source>
</evidence>
<evidence type="ECO:0007744" key="21">
    <source>
        <dbReference type="PDB" id="5HRI"/>
    </source>
</evidence>
<evidence type="ECO:0007744" key="22">
    <source>
        <dbReference type="PDB" id="5HRK"/>
    </source>
</evidence>
<evidence type="ECO:0007744" key="23">
    <source>
        <dbReference type="PDB" id="5HRL"/>
    </source>
</evidence>
<evidence type="ECO:0007744" key="24">
    <source>
        <dbReference type="PDB" id="5XM8"/>
    </source>
</evidence>
<evidence type="ECO:0007744" key="25">
    <source>
        <dbReference type="PDB" id="5XM9"/>
    </source>
</evidence>
<evidence type="ECO:0007744" key="26">
    <source>
        <dbReference type="PDB" id="5XMA"/>
    </source>
</evidence>
<evidence type="ECO:0007829" key="27">
    <source>
        <dbReference type="PDB" id="1JAJ"/>
    </source>
</evidence>
<evidence type="ECO:0007829" key="28">
    <source>
        <dbReference type="PDB" id="5HRB"/>
    </source>
</evidence>
<proteinExistence type="evidence at protein level"/>
<dbReference type="EC" id="2.7.7.7" evidence="4 5"/>
<dbReference type="EMBL" id="U18466">
    <property type="protein sequence ID" value="AAA65326.1"/>
    <property type="molecule type" value="Genomic_DNA"/>
</dbReference>
<dbReference type="RefSeq" id="NP_042790.1">
    <property type="nucleotide sequence ID" value="NC_001659.2"/>
</dbReference>
<dbReference type="PDB" id="1JAJ">
    <property type="method" value="NMR"/>
    <property type="chains" value="A=1-174"/>
</dbReference>
<dbReference type="PDB" id="1JQR">
    <property type="method" value="NMR"/>
    <property type="chains" value="A=1-174"/>
</dbReference>
<dbReference type="PDB" id="2M2T">
    <property type="method" value="NMR"/>
    <property type="chains" value="A=1-174"/>
</dbReference>
<dbReference type="PDB" id="2M2U">
    <property type="method" value="NMR"/>
    <property type="chains" value="A=1-174"/>
</dbReference>
<dbReference type="PDB" id="2M2V">
    <property type="method" value="NMR"/>
    <property type="chains" value="A=1-174"/>
</dbReference>
<dbReference type="PDB" id="2M2W">
    <property type="method" value="NMR"/>
    <property type="chains" value="A=1-174"/>
</dbReference>
<dbReference type="PDB" id="5HR9">
    <property type="method" value="X-ray"/>
    <property type="resolution" value="2.20 A"/>
    <property type="chains" value="A/B=1-174"/>
</dbReference>
<dbReference type="PDB" id="5HRB">
    <property type="method" value="X-ray"/>
    <property type="resolution" value="1.70 A"/>
    <property type="chains" value="A=1-174"/>
</dbReference>
<dbReference type="PDB" id="5HRD">
    <property type="method" value="X-ray"/>
    <property type="resolution" value="1.80 A"/>
    <property type="chains" value="A/B/C/D=1-174"/>
</dbReference>
<dbReference type="PDB" id="5HRE">
    <property type="method" value="X-ray"/>
    <property type="resolution" value="1.75 A"/>
    <property type="chains" value="A=1-174"/>
</dbReference>
<dbReference type="PDB" id="5HRF">
    <property type="method" value="X-ray"/>
    <property type="resolution" value="2.25 A"/>
    <property type="chains" value="A/B=1-174"/>
</dbReference>
<dbReference type="PDB" id="5HRG">
    <property type="method" value="X-ray"/>
    <property type="resolution" value="2.00 A"/>
    <property type="chains" value="A/B=1-174"/>
</dbReference>
<dbReference type="PDB" id="5HRH">
    <property type="method" value="X-ray"/>
    <property type="resolution" value="3.00 A"/>
    <property type="chains" value="A/B=1-174"/>
</dbReference>
<dbReference type="PDB" id="5HRI">
    <property type="method" value="X-ray"/>
    <property type="resolution" value="2.20 A"/>
    <property type="chains" value="A/B=1-174"/>
</dbReference>
<dbReference type="PDB" id="5HRK">
    <property type="method" value="X-ray"/>
    <property type="resolution" value="2.90 A"/>
    <property type="chains" value="A/B=1-174"/>
</dbReference>
<dbReference type="PDB" id="5HRL">
    <property type="method" value="X-ray"/>
    <property type="resolution" value="2.40 A"/>
    <property type="chains" value="A/B=1-174"/>
</dbReference>
<dbReference type="PDB" id="5XM8">
    <property type="method" value="X-ray"/>
    <property type="resolution" value="2.55 A"/>
    <property type="chains" value="A/B/C/D=1-174"/>
</dbReference>
<dbReference type="PDB" id="5XM9">
    <property type="method" value="X-ray"/>
    <property type="resolution" value="3.05 A"/>
    <property type="chains" value="A/B/C/D=1-174"/>
</dbReference>
<dbReference type="PDB" id="5XMA">
    <property type="method" value="X-ray"/>
    <property type="resolution" value="3.80 A"/>
    <property type="chains" value="A/B=1-174"/>
</dbReference>
<dbReference type="PDB" id="7CPW">
    <property type="method" value="X-ray"/>
    <property type="resolution" value="2.85 A"/>
    <property type="chains" value="A/B=1-174"/>
</dbReference>
<dbReference type="PDB" id="8E9A">
    <property type="method" value="X-ray"/>
    <property type="resolution" value="2.69 A"/>
    <property type="chains" value="A/B=1-174"/>
</dbReference>
<dbReference type="PDB" id="8ILD">
    <property type="method" value="X-ray"/>
    <property type="resolution" value="2.25 A"/>
    <property type="chains" value="A/B=1-174"/>
</dbReference>
<dbReference type="PDB" id="8ILE">
    <property type="method" value="X-ray"/>
    <property type="resolution" value="3.00 A"/>
    <property type="chains" value="A/B=1-174"/>
</dbReference>
<dbReference type="PDB" id="8ILF">
    <property type="method" value="X-ray"/>
    <property type="resolution" value="2.30 A"/>
    <property type="chains" value="A/B=1-174"/>
</dbReference>
<dbReference type="PDB" id="8ILG">
    <property type="method" value="X-ray"/>
    <property type="resolution" value="1.80 A"/>
    <property type="chains" value="A/B=1-174"/>
</dbReference>
<dbReference type="PDB" id="8ILH">
    <property type="method" value="X-ray"/>
    <property type="resolution" value="2.10 A"/>
    <property type="chains" value="A/B/C/D=1-174"/>
</dbReference>
<dbReference type="PDB" id="8ILI">
    <property type="method" value="X-ray"/>
    <property type="resolution" value="1.90 A"/>
    <property type="chains" value="A/B/C/D=1-174"/>
</dbReference>
<dbReference type="PDBsum" id="1JAJ"/>
<dbReference type="PDBsum" id="1JQR"/>
<dbReference type="PDBsum" id="2M2T"/>
<dbReference type="PDBsum" id="2M2U"/>
<dbReference type="PDBsum" id="2M2V"/>
<dbReference type="PDBsum" id="2M2W"/>
<dbReference type="PDBsum" id="5HR9"/>
<dbReference type="PDBsum" id="5HRB"/>
<dbReference type="PDBsum" id="5HRD"/>
<dbReference type="PDBsum" id="5HRE"/>
<dbReference type="PDBsum" id="5HRF"/>
<dbReference type="PDBsum" id="5HRG"/>
<dbReference type="PDBsum" id="5HRH"/>
<dbReference type="PDBsum" id="5HRI"/>
<dbReference type="PDBsum" id="5HRK"/>
<dbReference type="PDBsum" id="5HRL"/>
<dbReference type="PDBsum" id="5XM8"/>
<dbReference type="PDBsum" id="5XM9"/>
<dbReference type="PDBsum" id="5XMA"/>
<dbReference type="PDBsum" id="7CPW"/>
<dbReference type="PDBsum" id="8E9A"/>
<dbReference type="PDBsum" id="8ILD"/>
<dbReference type="PDBsum" id="8ILE"/>
<dbReference type="PDBsum" id="8ILF"/>
<dbReference type="PDBsum" id="8ILG"/>
<dbReference type="PDBsum" id="8ILH"/>
<dbReference type="PDBsum" id="8ILI"/>
<dbReference type="BMRB" id="P42494"/>
<dbReference type="SMR" id="P42494"/>
<dbReference type="GeneID" id="22220326"/>
<dbReference type="KEGG" id="vg:22220326"/>
<dbReference type="BRENDA" id="2.7.7.7">
    <property type="organism ID" value="176"/>
</dbReference>
<dbReference type="EvolutionaryTrace" id="P42494"/>
<dbReference type="Proteomes" id="UP000000624">
    <property type="component" value="Segment"/>
</dbReference>
<dbReference type="GO" id="GO:0044423">
    <property type="term" value="C:virion component"/>
    <property type="evidence" value="ECO:0007669"/>
    <property type="project" value="UniProtKB-KW"/>
</dbReference>
<dbReference type="GO" id="GO:0003677">
    <property type="term" value="F:DNA binding"/>
    <property type="evidence" value="ECO:0007669"/>
    <property type="project" value="UniProtKB-KW"/>
</dbReference>
<dbReference type="GO" id="GO:0003887">
    <property type="term" value="F:DNA-directed DNA polymerase activity"/>
    <property type="evidence" value="ECO:0000314"/>
    <property type="project" value="CACAO"/>
</dbReference>
<dbReference type="GO" id="GO:0046872">
    <property type="term" value="F:metal ion binding"/>
    <property type="evidence" value="ECO:0007669"/>
    <property type="project" value="UniProtKB-KW"/>
</dbReference>
<dbReference type="GO" id="GO:0006303">
    <property type="term" value="P:double-strand break repair via nonhomologous end joining"/>
    <property type="evidence" value="ECO:0007669"/>
    <property type="project" value="TreeGrafter"/>
</dbReference>
<dbReference type="FunFam" id="3.30.460.10:FF:000074">
    <property type="entry name" value="Repair DNA polymerase X"/>
    <property type="match status" value="1"/>
</dbReference>
<dbReference type="Gene3D" id="3.30.460.10">
    <property type="entry name" value="Beta Polymerase, domain 2"/>
    <property type="match status" value="1"/>
</dbReference>
<dbReference type="Gene3D" id="3.30.210.10">
    <property type="entry name" value="DNA polymerase, thumb domain"/>
    <property type="match status" value="1"/>
</dbReference>
<dbReference type="InterPro" id="IPR019843">
    <property type="entry name" value="DNA_pol-X_BS"/>
</dbReference>
<dbReference type="InterPro" id="IPR037160">
    <property type="entry name" value="DNA_Pol_thumb_sf"/>
</dbReference>
<dbReference type="InterPro" id="IPR022312">
    <property type="entry name" value="DNA_pol_X"/>
</dbReference>
<dbReference type="InterPro" id="IPR043519">
    <property type="entry name" value="NT_sf"/>
</dbReference>
<dbReference type="InterPro" id="IPR029398">
    <property type="entry name" value="PolB_thumb"/>
</dbReference>
<dbReference type="InterPro" id="IPR002934">
    <property type="entry name" value="Polymerase_NTP_transf_dom"/>
</dbReference>
<dbReference type="PANTHER" id="PTHR11276:SF28">
    <property type="entry name" value="DNA POLYMERASE LAMBDA"/>
    <property type="match status" value="1"/>
</dbReference>
<dbReference type="PANTHER" id="PTHR11276">
    <property type="entry name" value="DNA POLYMERASE TYPE-X FAMILY MEMBER"/>
    <property type="match status" value="1"/>
</dbReference>
<dbReference type="Pfam" id="PF14791">
    <property type="entry name" value="DNA_pol_B_thumb"/>
    <property type="match status" value="1"/>
</dbReference>
<dbReference type="Pfam" id="PF01909">
    <property type="entry name" value="NTP_transf_2"/>
    <property type="match status" value="1"/>
</dbReference>
<dbReference type="SUPFAM" id="SSF81301">
    <property type="entry name" value="Nucleotidyltransferase"/>
    <property type="match status" value="1"/>
</dbReference>
<dbReference type="PROSITE" id="PS00522">
    <property type="entry name" value="DNA_POLYMERASE_X"/>
    <property type="match status" value="1"/>
</dbReference>
<protein>
    <recommendedName>
        <fullName>Repair DNA polymerase X</fullName>
        <shortName>Pol X</shortName>
        <ecNumber evidence="4 5">2.7.7.7</ecNumber>
    </recommendedName>
    <alternativeName>
        <fullName>AsfvPolX</fullName>
    </alternativeName>
</protein>